<evidence type="ECO:0000250" key="1">
    <source>
        <dbReference type="UniProtKB" id="Q84MA2"/>
    </source>
</evidence>
<evidence type="ECO:0000256" key="2">
    <source>
        <dbReference type="SAM" id="MobiDB-lite"/>
    </source>
</evidence>
<evidence type="ECO:0000269" key="3">
    <source>
    </source>
</evidence>
<evidence type="ECO:0000269" key="4">
    <source>
    </source>
</evidence>
<evidence type="ECO:0000269" key="5">
    <source>
    </source>
</evidence>
<evidence type="ECO:0000303" key="6">
    <source>
    </source>
</evidence>
<evidence type="ECO:0000303" key="7">
    <source>
    </source>
</evidence>
<evidence type="ECO:0000303" key="8">
    <source ref="2"/>
</evidence>
<evidence type="ECO:0000303" key="9">
    <source ref="3"/>
</evidence>
<evidence type="ECO:0000305" key="10"/>
<evidence type="ECO:0000312" key="11">
    <source>
        <dbReference type="Araport" id="AT4G18010"/>
    </source>
</evidence>
<evidence type="ECO:0000312" key="12">
    <source>
        <dbReference type="EMBL" id="CAA17144.1"/>
    </source>
</evidence>
<name>IP5P2_ARATH</name>
<organism>
    <name type="scientific">Arabidopsis thaliana</name>
    <name type="common">Mouse-ear cress</name>
    <dbReference type="NCBI Taxonomy" id="3702"/>
    <lineage>
        <taxon>Eukaryota</taxon>
        <taxon>Viridiplantae</taxon>
        <taxon>Streptophyta</taxon>
        <taxon>Embryophyta</taxon>
        <taxon>Tracheophyta</taxon>
        <taxon>Spermatophyta</taxon>
        <taxon>Magnoliopsida</taxon>
        <taxon>eudicotyledons</taxon>
        <taxon>Gunneridae</taxon>
        <taxon>Pentapetalae</taxon>
        <taxon>rosids</taxon>
        <taxon>malvids</taxon>
        <taxon>Brassicales</taxon>
        <taxon>Brassicaceae</taxon>
        <taxon>Camelineae</taxon>
        <taxon>Arabidopsis</taxon>
    </lineage>
</organism>
<dbReference type="EC" id="3.1.3.56" evidence="3"/>
<dbReference type="EMBL" id="AF289634">
    <property type="protein sequence ID" value="AAG17825.1"/>
    <property type="molecule type" value="mRNA"/>
</dbReference>
<dbReference type="EMBL" id="AJ002295">
    <property type="protein sequence ID" value="CAB59428.1"/>
    <property type="molecule type" value="mRNA"/>
</dbReference>
<dbReference type="EMBL" id="AF117063">
    <property type="protein sequence ID" value="AAD10829.1"/>
    <property type="molecule type" value="mRNA"/>
</dbReference>
<dbReference type="EMBL" id="AL021889">
    <property type="protein sequence ID" value="CAA17144.1"/>
    <property type="status" value="ALT_SEQ"/>
    <property type="molecule type" value="Genomic_DNA"/>
</dbReference>
<dbReference type="EMBL" id="AL161547">
    <property type="protein sequence ID" value="CAB78803.1"/>
    <property type="status" value="ALT_SEQ"/>
    <property type="molecule type" value="Genomic_DNA"/>
</dbReference>
<dbReference type="EMBL" id="CP002687">
    <property type="protein sequence ID" value="AEE83979.1"/>
    <property type="molecule type" value="Genomic_DNA"/>
</dbReference>
<dbReference type="PIR" id="T05087">
    <property type="entry name" value="T05087"/>
</dbReference>
<dbReference type="PIR" id="T51937">
    <property type="entry name" value="T51937"/>
</dbReference>
<dbReference type="PIR" id="T51938">
    <property type="entry name" value="T51938"/>
</dbReference>
<dbReference type="RefSeq" id="NP_567547.1">
    <molecule id="Q9FUR2-1"/>
    <property type="nucleotide sequence ID" value="NM_117911.4"/>
</dbReference>
<dbReference type="SMR" id="Q9FUR2"/>
<dbReference type="BioGRID" id="12819">
    <property type="interactions" value="2"/>
</dbReference>
<dbReference type="FunCoup" id="Q9FUR2">
    <property type="interactions" value="2699"/>
</dbReference>
<dbReference type="IntAct" id="Q9FUR2">
    <property type="interactions" value="1"/>
</dbReference>
<dbReference type="STRING" id="3702.Q9FUR2"/>
<dbReference type="iPTMnet" id="Q9FUR2"/>
<dbReference type="PaxDb" id="3702-AT4G18010.1"/>
<dbReference type="ProteomicsDB" id="232225">
    <molecule id="Q9FUR2-1"/>
</dbReference>
<dbReference type="EnsemblPlants" id="AT4G18010.1">
    <molecule id="Q9FUR2-1"/>
    <property type="protein sequence ID" value="AT4G18010.1"/>
    <property type="gene ID" value="AT4G18010"/>
</dbReference>
<dbReference type="GeneID" id="827526"/>
<dbReference type="Gramene" id="AT4G18010.1">
    <molecule id="Q9FUR2-1"/>
    <property type="protein sequence ID" value="AT4G18010.1"/>
    <property type="gene ID" value="AT4G18010"/>
</dbReference>
<dbReference type="KEGG" id="ath:AT4G18010"/>
<dbReference type="Araport" id="AT4G18010"/>
<dbReference type="TAIR" id="AT4G18010">
    <property type="gene designation" value="IP5PII"/>
</dbReference>
<dbReference type="eggNOG" id="KOG0565">
    <property type="taxonomic scope" value="Eukaryota"/>
</dbReference>
<dbReference type="InParanoid" id="Q9FUR2"/>
<dbReference type="PhylomeDB" id="Q9FUR2"/>
<dbReference type="BioCyc" id="ARA:AT4G18010-MONOMER"/>
<dbReference type="BRENDA" id="3.1.3.56">
    <property type="organism ID" value="399"/>
</dbReference>
<dbReference type="PRO" id="PR:Q9FUR2"/>
<dbReference type="Proteomes" id="UP000006548">
    <property type="component" value="Chromosome 4"/>
</dbReference>
<dbReference type="ExpressionAtlas" id="Q9FUR2">
    <property type="expression patterns" value="baseline and differential"/>
</dbReference>
<dbReference type="GO" id="GO:0052659">
    <property type="term" value="F:inositol-1,3,4,5-tetrakisphosphate 5-phosphatase activity"/>
    <property type="evidence" value="ECO:0007669"/>
    <property type="project" value="RHEA"/>
</dbReference>
<dbReference type="GO" id="GO:0052658">
    <property type="term" value="F:inositol-1,4,5-trisphosphate 5-phosphatase activity"/>
    <property type="evidence" value="ECO:0007669"/>
    <property type="project" value="RHEA"/>
</dbReference>
<dbReference type="GO" id="GO:0004445">
    <property type="term" value="F:inositol-polyphosphate 5-phosphatase activity"/>
    <property type="evidence" value="ECO:0000314"/>
    <property type="project" value="TAIR"/>
</dbReference>
<dbReference type="GO" id="GO:0034485">
    <property type="term" value="F:phosphatidylinositol-3,4,5-trisphosphate 5-phosphatase activity"/>
    <property type="evidence" value="ECO:0000314"/>
    <property type="project" value="UniProtKB"/>
</dbReference>
<dbReference type="GO" id="GO:0004439">
    <property type="term" value="F:phosphatidylinositol-4,5-bisphosphate 5-phosphatase activity"/>
    <property type="evidence" value="ECO:0000314"/>
    <property type="project" value="UniProtKB"/>
</dbReference>
<dbReference type="GO" id="GO:0009738">
    <property type="term" value="P:abscisic acid-activated signaling pathway"/>
    <property type="evidence" value="ECO:0007669"/>
    <property type="project" value="UniProtKB-KW"/>
</dbReference>
<dbReference type="GO" id="GO:0032957">
    <property type="term" value="P:inositol trisphosphate metabolic process"/>
    <property type="evidence" value="ECO:0000315"/>
    <property type="project" value="TAIR"/>
</dbReference>
<dbReference type="GO" id="GO:0046856">
    <property type="term" value="P:phosphatidylinositol dephosphorylation"/>
    <property type="evidence" value="ECO:0000314"/>
    <property type="project" value="UniProtKB"/>
</dbReference>
<dbReference type="GO" id="GO:0009737">
    <property type="term" value="P:response to abscisic acid"/>
    <property type="evidence" value="ECO:0000315"/>
    <property type="project" value="TAIR"/>
</dbReference>
<dbReference type="GO" id="GO:0009845">
    <property type="term" value="P:seed germination"/>
    <property type="evidence" value="ECO:0000315"/>
    <property type="project" value="TAIR"/>
</dbReference>
<dbReference type="GO" id="GO:0090351">
    <property type="term" value="P:seedling development"/>
    <property type="evidence" value="ECO:0000315"/>
    <property type="project" value="UniProtKB"/>
</dbReference>
<dbReference type="FunFam" id="3.60.10.10:FF:000048">
    <property type="entry name" value="Type I inositol polyphosphate 5-phosphatase 2"/>
    <property type="match status" value="1"/>
</dbReference>
<dbReference type="FunFam" id="3.60.10.10:FF:000061">
    <property type="entry name" value="Type I inositol polyphosphate 5-phosphatase 2"/>
    <property type="match status" value="1"/>
</dbReference>
<dbReference type="Gene3D" id="3.60.10.10">
    <property type="entry name" value="Endonuclease/exonuclease/phosphatase"/>
    <property type="match status" value="2"/>
</dbReference>
<dbReference type="InterPro" id="IPR036691">
    <property type="entry name" value="Endo/exonu/phosph_ase_sf"/>
</dbReference>
<dbReference type="InterPro" id="IPR045849">
    <property type="entry name" value="IP5P_plant"/>
</dbReference>
<dbReference type="InterPro" id="IPR000300">
    <property type="entry name" value="IPPc"/>
</dbReference>
<dbReference type="PANTHER" id="PTHR45666:SF21">
    <property type="entry name" value="TYPE I INOSITOL POLYPHOSPHATE 5-PHOSPHATASE 2"/>
    <property type="match status" value="1"/>
</dbReference>
<dbReference type="PANTHER" id="PTHR45666">
    <property type="entry name" value="TYPE IV INOSITOL POLYPHOSPHATE 5-PHOSPHATASE 9"/>
    <property type="match status" value="1"/>
</dbReference>
<dbReference type="Pfam" id="PF22669">
    <property type="entry name" value="Exo_endo_phos2"/>
    <property type="match status" value="2"/>
</dbReference>
<dbReference type="SMART" id="SM00128">
    <property type="entry name" value="IPPc"/>
    <property type="match status" value="1"/>
</dbReference>
<dbReference type="SUPFAM" id="SSF56219">
    <property type="entry name" value="DNase I-like"/>
    <property type="match status" value="1"/>
</dbReference>
<reference key="1">
    <citation type="journal article" date="2001" name="Plant Cell">
        <title>Arabidopsis PLC1 is required for secondary responses to abscisic acid signals.</title>
        <authorList>
            <person name="Sanchez J.-P."/>
            <person name="Chua N.-H."/>
        </authorList>
    </citation>
    <scope>NUCLEOTIDE SEQUENCE [MRNA] (ISOFORM 1)</scope>
    <scope>FUNCTION</scope>
    <scope>CATALYTIC ACTIVITY</scope>
    <source>
        <strain>cv. Landsberg erecta</strain>
    </source>
</reference>
<reference key="2">
    <citation type="submission" date="1997-10" db="EMBL/GenBank/DDBJ databases">
        <authorList>
            <person name="Xue H."/>
            <person name="Mueller-Roeber B."/>
        </authorList>
    </citation>
    <scope>NUCLEOTIDE SEQUENCE [MRNA] (ISOFORM 2)</scope>
    <source>
        <tissue>Hypocotyl</tissue>
    </source>
</reference>
<reference key="3">
    <citation type="submission" date="1998-12" db="EMBL/GenBank/DDBJ databases">
        <title>Characterization of putative inositol (1,4,5)-trisphosphate/phosphatidylinositol (4,5)-bisphosphate 5-phosphatase cDNAs from Arabidopsis thaliana.</title>
        <authorList>
            <person name="Parzer M.S.A."/>
            <person name="de Vos S."/>
            <person name="van Lookeren Campagne M.M."/>
        </authorList>
    </citation>
    <scope>NUCLEOTIDE SEQUENCE [MRNA] (ISOFORM 1)</scope>
    <source>
        <strain>cv. Columbia</strain>
    </source>
</reference>
<reference key="4">
    <citation type="journal article" date="1999" name="Nature">
        <title>Sequence and analysis of chromosome 4 of the plant Arabidopsis thaliana.</title>
        <authorList>
            <person name="Mayer K.F.X."/>
            <person name="Schueller C."/>
            <person name="Wambutt R."/>
            <person name="Murphy G."/>
            <person name="Volckaert G."/>
            <person name="Pohl T."/>
            <person name="Duesterhoeft A."/>
            <person name="Stiekema W."/>
            <person name="Entian K.-D."/>
            <person name="Terryn N."/>
            <person name="Harris B."/>
            <person name="Ansorge W."/>
            <person name="Brandt P."/>
            <person name="Grivell L.A."/>
            <person name="Rieger M."/>
            <person name="Weichselgartner M."/>
            <person name="de Simone V."/>
            <person name="Obermaier B."/>
            <person name="Mache R."/>
            <person name="Mueller M."/>
            <person name="Kreis M."/>
            <person name="Delseny M."/>
            <person name="Puigdomenech P."/>
            <person name="Watson M."/>
            <person name="Schmidtheini T."/>
            <person name="Reichert B."/>
            <person name="Portetelle D."/>
            <person name="Perez-Alonso M."/>
            <person name="Boutry M."/>
            <person name="Bancroft I."/>
            <person name="Vos P."/>
            <person name="Hoheisel J."/>
            <person name="Zimmermann W."/>
            <person name="Wedler H."/>
            <person name="Ridley P."/>
            <person name="Langham S.-A."/>
            <person name="McCullagh B."/>
            <person name="Bilham L."/>
            <person name="Robben J."/>
            <person name="van der Schueren J."/>
            <person name="Grymonprez B."/>
            <person name="Chuang Y.-J."/>
            <person name="Vandenbussche F."/>
            <person name="Braeken M."/>
            <person name="Weltjens I."/>
            <person name="Voet M."/>
            <person name="Bastiaens I."/>
            <person name="Aert R."/>
            <person name="Defoor E."/>
            <person name="Weitzenegger T."/>
            <person name="Bothe G."/>
            <person name="Ramsperger U."/>
            <person name="Hilbert H."/>
            <person name="Braun M."/>
            <person name="Holzer E."/>
            <person name="Brandt A."/>
            <person name="Peters S."/>
            <person name="van Staveren M."/>
            <person name="Dirkse W."/>
            <person name="Mooijman P."/>
            <person name="Klein Lankhorst R."/>
            <person name="Rose M."/>
            <person name="Hauf J."/>
            <person name="Koetter P."/>
            <person name="Berneiser S."/>
            <person name="Hempel S."/>
            <person name="Feldpausch M."/>
            <person name="Lamberth S."/>
            <person name="Van den Daele H."/>
            <person name="De Keyser A."/>
            <person name="Buysshaert C."/>
            <person name="Gielen J."/>
            <person name="Villarroel R."/>
            <person name="De Clercq R."/>
            <person name="van Montagu M."/>
            <person name="Rogers J."/>
            <person name="Cronin A."/>
            <person name="Quail M.A."/>
            <person name="Bray-Allen S."/>
            <person name="Clark L."/>
            <person name="Doggett J."/>
            <person name="Hall S."/>
            <person name="Kay M."/>
            <person name="Lennard N."/>
            <person name="McLay K."/>
            <person name="Mayes R."/>
            <person name="Pettett A."/>
            <person name="Rajandream M.A."/>
            <person name="Lyne M."/>
            <person name="Benes V."/>
            <person name="Rechmann S."/>
            <person name="Borkova D."/>
            <person name="Bloecker H."/>
            <person name="Scharfe M."/>
            <person name="Grimm M."/>
            <person name="Loehnert T.-H."/>
            <person name="Dose S."/>
            <person name="de Haan M."/>
            <person name="Maarse A.C."/>
            <person name="Schaefer M."/>
            <person name="Mueller-Auer S."/>
            <person name="Gabel C."/>
            <person name="Fuchs M."/>
            <person name="Fartmann B."/>
            <person name="Granderath K."/>
            <person name="Dauner D."/>
            <person name="Herzl A."/>
            <person name="Neumann S."/>
            <person name="Argiriou A."/>
            <person name="Vitale D."/>
            <person name="Liguori R."/>
            <person name="Piravandi E."/>
            <person name="Massenet O."/>
            <person name="Quigley F."/>
            <person name="Clabauld G."/>
            <person name="Muendlein A."/>
            <person name="Felber R."/>
            <person name="Schnabl S."/>
            <person name="Hiller R."/>
            <person name="Schmidt W."/>
            <person name="Lecharny A."/>
            <person name="Aubourg S."/>
            <person name="Chefdor F."/>
            <person name="Cooke R."/>
            <person name="Berger C."/>
            <person name="Monfort A."/>
            <person name="Casacuberta E."/>
            <person name="Gibbons T."/>
            <person name="Weber N."/>
            <person name="Vandenbol M."/>
            <person name="Bargues M."/>
            <person name="Terol J."/>
            <person name="Torres A."/>
            <person name="Perez-Perez A."/>
            <person name="Purnelle B."/>
            <person name="Bent E."/>
            <person name="Johnson S."/>
            <person name="Tacon D."/>
            <person name="Jesse T."/>
            <person name="Heijnen L."/>
            <person name="Schwarz S."/>
            <person name="Scholler P."/>
            <person name="Heber S."/>
            <person name="Francs P."/>
            <person name="Bielke C."/>
            <person name="Frishman D."/>
            <person name="Haase D."/>
            <person name="Lemcke K."/>
            <person name="Mewes H.-W."/>
            <person name="Stocker S."/>
            <person name="Zaccaria P."/>
            <person name="Bevan M."/>
            <person name="Wilson R.K."/>
            <person name="de la Bastide M."/>
            <person name="Habermann K."/>
            <person name="Parnell L."/>
            <person name="Dedhia N."/>
            <person name="Gnoj L."/>
            <person name="Schutz K."/>
            <person name="Huang E."/>
            <person name="Spiegel L."/>
            <person name="Sekhon M."/>
            <person name="Murray J."/>
            <person name="Sheet P."/>
            <person name="Cordes M."/>
            <person name="Abu-Threideh J."/>
            <person name="Stoneking T."/>
            <person name="Kalicki J."/>
            <person name="Graves T."/>
            <person name="Harmon G."/>
            <person name="Edwards J."/>
            <person name="Latreille P."/>
            <person name="Courtney L."/>
            <person name="Cloud J."/>
            <person name="Abbott A."/>
            <person name="Scott K."/>
            <person name="Johnson D."/>
            <person name="Minx P."/>
            <person name="Bentley D."/>
            <person name="Fulton B."/>
            <person name="Miller N."/>
            <person name="Greco T."/>
            <person name="Kemp K."/>
            <person name="Kramer J."/>
            <person name="Fulton L."/>
            <person name="Mardis E."/>
            <person name="Dante M."/>
            <person name="Pepin K."/>
            <person name="Hillier L.W."/>
            <person name="Nelson J."/>
            <person name="Spieth J."/>
            <person name="Ryan E."/>
            <person name="Andrews S."/>
            <person name="Geisel C."/>
            <person name="Layman D."/>
            <person name="Du H."/>
            <person name="Ali J."/>
            <person name="Berghoff A."/>
            <person name="Jones K."/>
            <person name="Drone K."/>
            <person name="Cotton M."/>
            <person name="Joshu C."/>
            <person name="Antonoiu B."/>
            <person name="Zidanic M."/>
            <person name="Strong C."/>
            <person name="Sun H."/>
            <person name="Lamar B."/>
            <person name="Yordan C."/>
            <person name="Ma P."/>
            <person name="Zhong J."/>
            <person name="Preston R."/>
            <person name="Vil D."/>
            <person name="Shekher M."/>
            <person name="Matero A."/>
            <person name="Shah R."/>
            <person name="Swaby I.K."/>
            <person name="O'Shaughnessy A."/>
            <person name="Rodriguez M."/>
            <person name="Hoffman J."/>
            <person name="Till S."/>
            <person name="Granat S."/>
            <person name="Shohdy N."/>
            <person name="Hasegawa A."/>
            <person name="Hameed A."/>
            <person name="Lodhi M."/>
            <person name="Johnson A."/>
            <person name="Chen E."/>
            <person name="Marra M.A."/>
            <person name="Martienssen R."/>
            <person name="McCombie W.R."/>
        </authorList>
    </citation>
    <scope>NUCLEOTIDE SEQUENCE [LARGE SCALE GENOMIC DNA]</scope>
    <source>
        <strain>cv. Columbia</strain>
    </source>
</reference>
<reference key="5">
    <citation type="journal article" date="2017" name="Plant J.">
        <title>Araport11: a complete reannotation of the Arabidopsis thaliana reference genome.</title>
        <authorList>
            <person name="Cheng C.Y."/>
            <person name="Krishnakumar V."/>
            <person name="Chan A.P."/>
            <person name="Thibaud-Nissen F."/>
            <person name="Schobel S."/>
            <person name="Town C.D."/>
        </authorList>
    </citation>
    <scope>GENOME REANNOTATION</scope>
    <source>
        <strain>cv. Columbia</strain>
    </source>
</reference>
<reference key="6">
    <citation type="journal article" date="2001" name="Plant Physiol.">
        <title>Molecular characterization of At5PTase1, an inositol phosphatase capable of terminating inositol trisphosphate signaling.</title>
        <authorList>
            <person name="Berdy S.E."/>
            <person name="Kudla J."/>
            <person name="Gruissem W."/>
            <person name="Gillaspy G.E."/>
        </authorList>
    </citation>
    <scope>GENE FAMILY</scope>
</reference>
<reference key="7">
    <citation type="journal article" date="2007" name="Plant Physiol.">
        <title>Inositol polyphosphate 5-phosphatases 1 and 2 are required for regulating seedling growth.</title>
        <authorList>
            <person name="Gunesekera B."/>
            <person name="Torabinejad J."/>
            <person name="Robinson J."/>
            <person name="Gillaspy G.E."/>
        </authorList>
    </citation>
    <scope>DISRUPTION PHENOTYPE</scope>
    <scope>TISSUE SPECIFICITY</scope>
</reference>
<reference key="8">
    <citation type="journal article" date="2009" name="Plant Physiol.">
        <title>Large-scale Arabidopsis phosphoproteome profiling reveals novel chloroplast kinase substrates and phosphorylation networks.</title>
        <authorList>
            <person name="Reiland S."/>
            <person name="Messerli G."/>
            <person name="Baerenfaller K."/>
            <person name="Gerrits B."/>
            <person name="Endler A."/>
            <person name="Grossmann J."/>
            <person name="Gruissem W."/>
            <person name="Baginsky S."/>
        </authorList>
    </citation>
    <scope>IDENTIFICATION BY MASS SPECTROMETRY [LARGE SCALE ANALYSIS]</scope>
</reference>
<reference key="9">
    <citation type="journal article" date="2013" name="Mol. Plant">
        <title>Inositol polyphosphate phosphatidylinositol 5-phosphatase9 (At5ptase9) controls plant salt tolerance by regulating endocytosis.</title>
        <authorList>
            <person name="Golani Y."/>
            <person name="Kaye Y."/>
            <person name="Gilhar O."/>
            <person name="Ercetin M."/>
            <person name="Gillaspy G."/>
            <person name="Levine A."/>
        </authorList>
    </citation>
    <scope>DISRUPTION PHENOTYPE</scope>
    <scope>FUNCTION</scope>
</reference>
<feature type="chain" id="PRO_0000209723" description="Type I inositol polyphosphate 5-phosphatase 2">
    <location>
        <begin position="1"/>
        <end position="646"/>
    </location>
</feature>
<feature type="region of interest" description="Disordered" evidence="2">
    <location>
        <begin position="59"/>
        <end position="99"/>
    </location>
</feature>
<feature type="region of interest" description="Disordered" evidence="2">
    <location>
        <begin position="185"/>
        <end position="207"/>
    </location>
</feature>
<feature type="region of interest" description="Disordered" evidence="2">
    <location>
        <begin position="329"/>
        <end position="369"/>
    </location>
</feature>
<feature type="region of interest" description="Catalytic 1" evidence="1">
    <location>
        <begin position="495"/>
        <end position="510"/>
    </location>
</feature>
<feature type="region of interest" description="Catalytic 2" evidence="1">
    <location>
        <begin position="575"/>
        <end position="590"/>
    </location>
</feature>
<feature type="compositionally biased region" description="Basic and acidic residues" evidence="2">
    <location>
        <begin position="59"/>
        <end position="74"/>
    </location>
</feature>
<feature type="compositionally biased region" description="Polar residues" evidence="2">
    <location>
        <begin position="188"/>
        <end position="207"/>
    </location>
</feature>
<feature type="compositionally biased region" description="Basic and acidic residues" evidence="2">
    <location>
        <begin position="341"/>
        <end position="350"/>
    </location>
</feature>
<feature type="splice variant" id="VSP_013849" description="In isoform 2." evidence="8">
    <location>
        <begin position="327"/>
        <end position="359"/>
    </location>
</feature>
<feature type="sequence conflict" description="In Ref. 2; CAB59428." evidence="10" ref="2">
    <original>A</original>
    <variation>R</variation>
    <location>
        <position position="72"/>
    </location>
</feature>
<feature type="sequence conflict" description="In Ref. 3; AAD10829." evidence="10" ref="3">
    <original>L</original>
    <variation>F</variation>
    <location>
        <position position="483"/>
    </location>
</feature>
<feature type="sequence conflict" description="In Ref. 1; AAG17825, 2; CAB59428 and 3; AAD10829." evidence="10" ref="1 2 3">
    <original>P</original>
    <variation>G</variation>
    <location>
        <position position="573"/>
    </location>
</feature>
<accession>Q9FUR2</accession>
<accession>O49700</accession>
<accession>Q9SNF1</accession>
<accession>Q9ZSC3</accession>
<gene>
    <name evidence="6" type="primary">IP5P2</name>
    <name evidence="9" type="synonym">5P2</name>
    <name evidence="11" type="ordered locus">At4g18010</name>
    <name evidence="12" type="ORF">T6K21.190</name>
</gene>
<proteinExistence type="evidence at protein level"/>
<sequence length="646" mass="73579">MKTRRGKRPERFWPSIVMNKWLNRKPKVYDFSEDEIDTEPESEDDVCSVKDVPNVHCVTDEDSHNGRRGSEADHGNNISDGGVSVRGGYQRKHRRGKSETLRAQYINTKDIKVTVATWNVAGKRPSDDLEIEDWLSTDNPSDIYIIGFQEVVPLNAGNVFGAEDRGPIPKWESIIRRTLNKSNKESVYDQSPSCNNNALHRSHSAPSSPILAQEANSIISHVMVENLVADHSLDLATNEFIDAATALPSLEPQRNPNMDWPELALDSNPQIVGSEGKLRRVFSSNATLGFKLPENPSGASRFASEARQLKRSRSFETLNLSWNDIKEEIDNRSSSSSEAEEAAKIMHDDSSDGDSSSQDEEDGDKIRNSYGLPEDLVEECRKVKDSQKYVRIVSKQMVGIYVSVWIRRRLRRHVNNLKVSPVGVGLMGYMGNKGSVSISMTLYQSRMCFVCSHLTSGHKDGAEQRRNADVYEIIRRTRFASVLDTDQPRTIPCHDQVFWFGDLNYRLNMSDGEVRKLVSQKRWDELKNSDQLIRELRRGHVFDGWREGPIKFPPTYKYEFDSDRYAGENLREPEKKRAPAWCDRILWLGKGIRQECYKRSEIRMSDHRPVTSIFNVGVEVFDHRKLQRALHVNNAAASAVHPEPSF</sequence>
<comment type="function">
    <text evidence="3 5">Has phosphatase activity toward Ins(1,4,5)P3 and Ins(1,3,4,5)P4. Seems to be involved in the abscisic acid (ABA) signaling pathway (PubMed:11340187). Could also be able to hydrolyze PtdIns(4,5)P2 and PtdIns(3,4,5)P3 (PubMed:23658066).</text>
</comment>
<comment type="catalytic activity">
    <reaction evidence="3">
        <text>1D-myo-inositol 1,4,5-trisphosphate + H2O = 1D-myo-inositol 1,4-bisphosphate + phosphate</text>
        <dbReference type="Rhea" id="RHEA:19797"/>
        <dbReference type="ChEBI" id="CHEBI:15377"/>
        <dbReference type="ChEBI" id="CHEBI:43474"/>
        <dbReference type="ChEBI" id="CHEBI:58282"/>
        <dbReference type="ChEBI" id="CHEBI:203600"/>
        <dbReference type="EC" id="3.1.3.56"/>
    </reaction>
</comment>
<comment type="catalytic activity">
    <reaction evidence="3">
        <text>1D-myo-inositol 1,3,4,5-tetrakisphosphate + H2O = 1D-myo-inositol 1,3,4-trisphosphate + phosphate</text>
        <dbReference type="Rhea" id="RHEA:11392"/>
        <dbReference type="ChEBI" id="CHEBI:15377"/>
        <dbReference type="ChEBI" id="CHEBI:43474"/>
        <dbReference type="ChEBI" id="CHEBI:57895"/>
        <dbReference type="ChEBI" id="CHEBI:58414"/>
        <dbReference type="EC" id="3.1.3.56"/>
    </reaction>
</comment>
<comment type="interaction">
    <interactant intactId="EBI-25510894">
        <id>Q9FUR2</id>
    </interactant>
    <interactant intactId="EBI-4425342">
        <id>Q9ZVY7</id>
        <label>OBAP1A</label>
    </interactant>
    <organismsDiffer>false</organismsDiffer>
    <experiments>4</experiments>
</comment>
<comment type="alternative products">
    <event type="alternative splicing"/>
    <isoform>
        <id>Q9FUR2-1</id>
        <name>1</name>
        <sequence type="displayed"/>
    </isoform>
    <isoform>
        <id>Q9FUR2-2</id>
        <name>2</name>
        <sequence type="described" ref="VSP_013849"/>
    </isoform>
</comment>
<comment type="tissue specificity">
    <text evidence="4">Expressed ubiquitously.</text>
</comment>
<comment type="disruption phenotype">
    <text evidence="4 5">No visible phenotype (PubMed:23658066). Alterations in germination and in early seedling growth. Enhanced sensibility to abscisic acid (ABA) with elevated levels of Ins(1,4,5)P3 (PubMed:17237190).</text>
</comment>
<comment type="similarity">
    <text evidence="10">Belongs to the inositol polyphosphate 5-phosphatase family.</text>
</comment>
<comment type="sequence caution" evidence="10">
    <conflict type="erroneous gene model prediction">
        <sequence resource="EMBL-CDS" id="CAA17144"/>
    </conflict>
</comment>
<comment type="sequence caution" evidence="10">
    <conflict type="erroneous gene model prediction">
        <sequence resource="EMBL-CDS" id="CAB78803"/>
    </conflict>
</comment>
<keyword id="KW-0938">Abscisic acid signaling pathway</keyword>
<keyword id="KW-0025">Alternative splicing</keyword>
<keyword id="KW-0378">Hydrolase</keyword>
<keyword id="KW-1185">Reference proteome</keyword>
<protein>
    <recommendedName>
        <fullName evidence="7">Type I inositol polyphosphate 5-phosphatase 2</fullName>
        <shortName evidence="7">At5PTase2</shortName>
        <ecNumber evidence="3">3.1.3.56</ecNumber>
    </recommendedName>
</protein>